<protein>
    <recommendedName>
        <fullName evidence="6">Pheophorbide a oxygenase, chloroplastic</fullName>
        <shortName evidence="6">OsPaO</shortName>
        <shortName evidence="7">Pheide a oxygenase</shortName>
        <ecNumber evidence="1">1.14.15.17</ecNumber>
    </recommendedName>
</protein>
<accession>Q0DV66</accession>
<accession>Q10RT5</accession>
<comment type="function">
    <text evidence="1 5">Catalyzes the key reaction of chlorophyll catabolism, porphyrin macrocycle cleavage of pheophorbide a (pheide a) to a primary fluorescent catabolite (pFCC). Works in a two-step reaction with red chlorophyll catabolite reductase (RCCR). Creates the intermediate RCC through the opening of the porphyrin macrocycle by the introduction of one atom of molecular oxygen at the alpha-methine bridge. Seems to be specific for pheide a. Belongs to the chlorophyll catabolic enzymes (CCEs) (By similarity). May play a role in senescence and response to wounding (PubMed:21807436).</text>
</comment>
<comment type="catalytic activity">
    <reaction evidence="1">
        <text>pheophorbide a + 2 reduced [2Fe-2S]-[ferredoxin] + O2 + 2 H(+) = red chlorophyll catabolite + 2 oxidized [2Fe-2S]-[ferredoxin]</text>
        <dbReference type="Rhea" id="RHEA:48140"/>
        <dbReference type="Rhea" id="RHEA-COMP:10000"/>
        <dbReference type="Rhea" id="RHEA-COMP:10001"/>
        <dbReference type="ChEBI" id="CHEBI:15378"/>
        <dbReference type="ChEBI" id="CHEBI:15379"/>
        <dbReference type="ChEBI" id="CHEBI:33737"/>
        <dbReference type="ChEBI" id="CHEBI:33738"/>
        <dbReference type="ChEBI" id="CHEBI:58687"/>
        <dbReference type="ChEBI" id="CHEBI:58716"/>
        <dbReference type="EC" id="1.14.15.17"/>
    </reaction>
    <physiologicalReaction direction="left-to-right" evidence="7">
        <dbReference type="Rhea" id="RHEA:48141"/>
    </physiologicalReaction>
</comment>
<comment type="cofactor">
    <cofactor evidence="3">
        <name>[2Fe-2S] cluster</name>
        <dbReference type="ChEBI" id="CHEBI:190135"/>
    </cofactor>
    <text evidence="3">Binds 1 [2Fe-2S] cluster per subunit.</text>
</comment>
<comment type="pathway">
    <text evidence="7">Porphyrin-containing compound metabolism; chlorophyll degradation.</text>
</comment>
<comment type="subcellular location">
    <subcellularLocation>
        <location evidence="2">Plastid</location>
        <location evidence="2">Chloroplast</location>
    </subcellularLocation>
</comment>
<comment type="tissue specificity">
    <text evidence="5">Expressed in leaves (PubMed:21807436). Expressed at low levels in roots, stems, panicles and seeds (PubMed:21807436).</text>
</comment>
<comment type="induction">
    <text evidence="5">Induced by wounding and senescence in leaves.</text>
</comment>
<comment type="miscellaneous">
    <text evidence="5">Plants silencing PAO die shortly after regeneration.</text>
</comment>
<comment type="sequence caution" evidence="7">
    <conflict type="erroneous initiation">
        <sequence resource="EMBL-CDS" id="ABF93963"/>
    </conflict>
    <text>Extended N-terminus.</text>
</comment>
<organism>
    <name type="scientific">Oryza sativa subsp. japonica</name>
    <name type="common">Rice</name>
    <dbReference type="NCBI Taxonomy" id="39947"/>
    <lineage>
        <taxon>Eukaryota</taxon>
        <taxon>Viridiplantae</taxon>
        <taxon>Streptophyta</taxon>
        <taxon>Embryophyta</taxon>
        <taxon>Tracheophyta</taxon>
        <taxon>Spermatophyta</taxon>
        <taxon>Magnoliopsida</taxon>
        <taxon>Liliopsida</taxon>
        <taxon>Poales</taxon>
        <taxon>Poaceae</taxon>
        <taxon>BOP clade</taxon>
        <taxon>Oryzoideae</taxon>
        <taxon>Oryzeae</taxon>
        <taxon>Oryzinae</taxon>
        <taxon>Oryza</taxon>
        <taxon>Oryza sativa</taxon>
    </lineage>
</organism>
<evidence type="ECO:0000250" key="1">
    <source>
        <dbReference type="UniProtKB" id="Q9FYC2"/>
    </source>
</evidence>
<evidence type="ECO:0000255" key="2"/>
<evidence type="ECO:0000255" key="3">
    <source>
        <dbReference type="PROSITE-ProRule" id="PRU00628"/>
    </source>
</evidence>
<evidence type="ECO:0000256" key="4">
    <source>
        <dbReference type="SAM" id="MobiDB-lite"/>
    </source>
</evidence>
<evidence type="ECO:0000269" key="5">
    <source>
    </source>
</evidence>
<evidence type="ECO:0000303" key="6">
    <source>
    </source>
</evidence>
<evidence type="ECO:0000305" key="7"/>
<evidence type="ECO:0000312" key="8">
    <source>
        <dbReference type="EMBL" id="ABF93963.1"/>
    </source>
</evidence>
<evidence type="ECO:0000312" key="9">
    <source>
        <dbReference type="EMBL" id="BAS82280.1"/>
    </source>
</evidence>
<dbReference type="EC" id="1.14.15.17" evidence="1"/>
<dbReference type="EMBL" id="DP000009">
    <property type="protein sequence ID" value="ABF93963.1"/>
    <property type="status" value="ALT_INIT"/>
    <property type="molecule type" value="Genomic_DNA"/>
</dbReference>
<dbReference type="EMBL" id="AP014959">
    <property type="protein sequence ID" value="BAS82280.1"/>
    <property type="molecule type" value="Genomic_DNA"/>
</dbReference>
<dbReference type="SMR" id="Q0DV66"/>
<dbReference type="FunCoup" id="Q0DV66">
    <property type="interactions" value="126"/>
</dbReference>
<dbReference type="STRING" id="39947.Q0DV66"/>
<dbReference type="PaxDb" id="39947-Q0DV66"/>
<dbReference type="EnsemblPlants" id="Os03t0146400-01">
    <property type="protein sequence ID" value="Os03t0146400-01"/>
    <property type="gene ID" value="Os03g0146400"/>
</dbReference>
<dbReference type="EnsemblPlants" id="Os03t0146400-02">
    <property type="protein sequence ID" value="Os03t0146400-02"/>
    <property type="gene ID" value="Os03g0146400"/>
</dbReference>
<dbReference type="Gramene" id="Os03t0146400-01">
    <property type="protein sequence ID" value="Os03t0146400-01"/>
    <property type="gene ID" value="Os03g0146400"/>
</dbReference>
<dbReference type="Gramene" id="Os03t0146400-02">
    <property type="protein sequence ID" value="Os03t0146400-02"/>
    <property type="gene ID" value="Os03g0146400"/>
</dbReference>
<dbReference type="KEGG" id="osa:4331611"/>
<dbReference type="eggNOG" id="ENOG502QQ8U">
    <property type="taxonomic scope" value="Eukaryota"/>
</dbReference>
<dbReference type="HOGENOM" id="CLU_003927_1_0_1"/>
<dbReference type="InParanoid" id="Q0DV66"/>
<dbReference type="OMA" id="MWHDLTS"/>
<dbReference type="OrthoDB" id="426882at2759"/>
<dbReference type="BRENDA" id="1.14.15.17">
    <property type="organism ID" value="8948"/>
</dbReference>
<dbReference type="UniPathway" id="UPA00674"/>
<dbReference type="Proteomes" id="UP000059680">
    <property type="component" value="Chromosome 3"/>
</dbReference>
<dbReference type="GO" id="GO:0009507">
    <property type="term" value="C:chloroplast"/>
    <property type="evidence" value="ECO:0007669"/>
    <property type="project" value="UniProtKB-SubCell"/>
</dbReference>
<dbReference type="GO" id="GO:0005737">
    <property type="term" value="C:cytoplasm"/>
    <property type="evidence" value="ECO:0000318"/>
    <property type="project" value="GO_Central"/>
</dbReference>
<dbReference type="GO" id="GO:0051537">
    <property type="term" value="F:2 iron, 2 sulfur cluster binding"/>
    <property type="evidence" value="ECO:0007669"/>
    <property type="project" value="UniProtKB-KW"/>
</dbReference>
<dbReference type="GO" id="GO:0010277">
    <property type="term" value="F:chlorophyllide a oxygenase activity"/>
    <property type="evidence" value="ECO:0007669"/>
    <property type="project" value="InterPro"/>
</dbReference>
<dbReference type="GO" id="GO:0046872">
    <property type="term" value="F:metal ion binding"/>
    <property type="evidence" value="ECO:0007669"/>
    <property type="project" value="UniProtKB-KW"/>
</dbReference>
<dbReference type="GO" id="GO:0032441">
    <property type="term" value="F:pheophorbide a oxygenase activity"/>
    <property type="evidence" value="ECO:0000318"/>
    <property type="project" value="GO_Central"/>
</dbReference>
<dbReference type="GO" id="GO:0015996">
    <property type="term" value="P:chlorophyll catabolic process"/>
    <property type="evidence" value="ECO:0007669"/>
    <property type="project" value="UniProtKB-UniPathway"/>
</dbReference>
<dbReference type="GO" id="GO:0042742">
    <property type="term" value="P:defense response to bacterium"/>
    <property type="evidence" value="ECO:0007669"/>
    <property type="project" value="EnsemblPlants"/>
</dbReference>
<dbReference type="GO" id="GO:0009908">
    <property type="term" value="P:flower development"/>
    <property type="evidence" value="ECO:0007669"/>
    <property type="project" value="EnsemblPlants"/>
</dbReference>
<dbReference type="GO" id="GO:0010154">
    <property type="term" value="P:fruit development"/>
    <property type="evidence" value="ECO:0007669"/>
    <property type="project" value="EnsemblPlants"/>
</dbReference>
<dbReference type="CDD" id="cd03480">
    <property type="entry name" value="Rieske_RO_Alpha_PaO"/>
    <property type="match status" value="1"/>
</dbReference>
<dbReference type="Gene3D" id="3.90.380.10">
    <property type="entry name" value="Naphthalene 1,2-dioxygenase Alpha Subunit, Chain A, domain 1"/>
    <property type="match status" value="1"/>
</dbReference>
<dbReference type="Gene3D" id="2.102.10.10">
    <property type="entry name" value="Rieske [2Fe-2S] iron-sulphur domain"/>
    <property type="match status" value="1"/>
</dbReference>
<dbReference type="InterPro" id="IPR050584">
    <property type="entry name" value="Cholesterol_7-desaturase"/>
</dbReference>
<dbReference type="InterPro" id="IPR013626">
    <property type="entry name" value="PaO"/>
</dbReference>
<dbReference type="InterPro" id="IPR017941">
    <property type="entry name" value="Rieske_2Fe-2S"/>
</dbReference>
<dbReference type="InterPro" id="IPR036922">
    <property type="entry name" value="Rieske_2Fe-2S_sf"/>
</dbReference>
<dbReference type="PANTHER" id="PTHR21266">
    <property type="entry name" value="IRON-SULFUR DOMAIN CONTAINING PROTEIN"/>
    <property type="match status" value="1"/>
</dbReference>
<dbReference type="PANTHER" id="PTHR21266:SF24">
    <property type="entry name" value="PHEOPHORBIDE A OXYGENASE, CHLOROPLASTIC"/>
    <property type="match status" value="1"/>
</dbReference>
<dbReference type="Pfam" id="PF08417">
    <property type="entry name" value="PaO"/>
    <property type="match status" value="1"/>
</dbReference>
<dbReference type="Pfam" id="PF00355">
    <property type="entry name" value="Rieske"/>
    <property type="match status" value="1"/>
</dbReference>
<dbReference type="SUPFAM" id="SSF55961">
    <property type="entry name" value="Bet v1-like"/>
    <property type="match status" value="1"/>
</dbReference>
<dbReference type="SUPFAM" id="SSF50022">
    <property type="entry name" value="ISP domain"/>
    <property type="match status" value="1"/>
</dbReference>
<dbReference type="PROSITE" id="PS51296">
    <property type="entry name" value="RIESKE"/>
    <property type="match status" value="1"/>
</dbReference>
<gene>
    <name evidence="6" type="primary">PAO</name>
    <name evidence="9" type="ordered locus">Os03g0146400</name>
    <name evidence="8" type="ordered locus">LOC_Os03g05310</name>
</gene>
<keyword id="KW-0001">2Fe-2S</keyword>
<keyword id="KW-0881">Chlorophyll catabolism</keyword>
<keyword id="KW-0150">Chloroplast</keyword>
<keyword id="KW-0408">Iron</keyword>
<keyword id="KW-0411">Iron-sulfur</keyword>
<keyword id="KW-0479">Metal-binding</keyword>
<keyword id="KW-0560">Oxidoreductase</keyword>
<keyword id="KW-0934">Plastid</keyword>
<keyword id="KW-1185">Reference proteome</keyword>
<keyword id="KW-0809">Transit peptide</keyword>
<sequence length="529" mass="59074">MPVMAPTASLLLSPRPLPASRRVPSLPALSASGRLRLRRARADTRLRVAAPPSVPGEADQAPGETEPSTSSADEKFVWRDHWYPVSLVEDLDPSVPTPFQLLNRDLVIWKDPKSGEWVALDDRCPHRLAPLSEGRIDETGCLQCSYHGWSFDGSGACTRIPQAAPEGPEAKAVRSPKACAIKFPTLVSQGLLFVWPDENGWEKATATKPPMLPKEFEDPAFSTVTIQRDLYYGYDTLMENVSDPSHIEFAHHKVTGRRDRARPLPFKMESSGAWGYSGSNSGNPRISATFVAPCYALNKIEIDTKLPIFGDQKWVIWICSFNIPMAPGKTRSIVCSARNFFQFSMPGKAWWQLVPRWYEHWTSNLVYDGDMIVLQGQEKIFLSASKESSADINQQYTKITFTPTQADRFVLAFRAWLRKFGNSQPDWFGNPSQEVLPSTVLSKREMLDRYEQHTLKCSSCKGAYNAFQTLQKVFMGATVAFCATAGIPADVQFRLLLAAAALVSAAVAYAFYTLQKNFVFVDYVHAEID</sequence>
<name>PAO_ORYSJ</name>
<reference key="1">
    <citation type="journal article" date="2005" name="Genome Res.">
        <title>Sequence, annotation, and analysis of synteny between rice chromosome 3 and diverged grass species.</title>
        <authorList>
            <consortium name="The rice chromosome 3 sequencing consortium"/>
            <person name="Buell C.R."/>
            <person name="Yuan Q."/>
            <person name="Ouyang S."/>
            <person name="Liu J."/>
            <person name="Zhu W."/>
            <person name="Wang A."/>
            <person name="Maiti R."/>
            <person name="Haas B."/>
            <person name="Wortman J."/>
            <person name="Pertea M."/>
            <person name="Jones K.M."/>
            <person name="Kim M."/>
            <person name="Overton L."/>
            <person name="Tsitrin T."/>
            <person name="Fadrosh D."/>
            <person name="Bera J."/>
            <person name="Weaver B."/>
            <person name="Jin S."/>
            <person name="Johri S."/>
            <person name="Reardon M."/>
            <person name="Webb K."/>
            <person name="Hill J."/>
            <person name="Moffat K."/>
            <person name="Tallon L."/>
            <person name="Van Aken S."/>
            <person name="Lewis M."/>
            <person name="Utterback T."/>
            <person name="Feldblyum T."/>
            <person name="Zismann V."/>
            <person name="Iobst S."/>
            <person name="Hsiao J."/>
            <person name="de Vazeille A.R."/>
            <person name="Salzberg S.L."/>
            <person name="White O."/>
            <person name="Fraser C.M."/>
            <person name="Yu Y."/>
            <person name="Kim H."/>
            <person name="Rambo T."/>
            <person name="Currie J."/>
            <person name="Collura K."/>
            <person name="Kernodle-Thompson S."/>
            <person name="Wei F."/>
            <person name="Kudrna K."/>
            <person name="Ammiraju J.S.S."/>
            <person name="Luo M."/>
            <person name="Goicoechea J.L."/>
            <person name="Wing R.A."/>
            <person name="Henry D."/>
            <person name="Oates R."/>
            <person name="Palmer M."/>
            <person name="Pries G."/>
            <person name="Saski C."/>
            <person name="Simmons J."/>
            <person name="Soderlund C."/>
            <person name="Nelson W."/>
            <person name="de la Bastide M."/>
            <person name="Spiegel L."/>
            <person name="Nascimento L."/>
            <person name="Huang E."/>
            <person name="Preston R."/>
            <person name="Zutavern T."/>
            <person name="Palmer L."/>
            <person name="O'Shaughnessy A."/>
            <person name="Dike S."/>
            <person name="McCombie W.R."/>
            <person name="Minx P."/>
            <person name="Cordum H."/>
            <person name="Wilson R."/>
            <person name="Jin W."/>
            <person name="Lee H.R."/>
            <person name="Jiang J."/>
            <person name="Jackson S."/>
        </authorList>
    </citation>
    <scope>NUCLEOTIDE SEQUENCE [LARGE SCALE GENOMIC DNA]</scope>
    <source>
        <strain>cv. Nipponbare</strain>
    </source>
</reference>
<reference key="2">
    <citation type="journal article" date="2005" name="Nature">
        <title>The map-based sequence of the rice genome.</title>
        <authorList>
            <consortium name="International rice genome sequencing project (IRGSP)"/>
        </authorList>
    </citation>
    <scope>NUCLEOTIDE SEQUENCE [LARGE SCALE GENOMIC DNA]</scope>
    <source>
        <strain>cv. Nipponbare</strain>
    </source>
</reference>
<reference key="3">
    <citation type="journal article" date="2013" name="Rice">
        <title>Improvement of the Oryza sativa Nipponbare reference genome using next generation sequence and optical map data.</title>
        <authorList>
            <person name="Kawahara Y."/>
            <person name="de la Bastide M."/>
            <person name="Hamilton J.P."/>
            <person name="Kanamori H."/>
            <person name="McCombie W.R."/>
            <person name="Ouyang S."/>
            <person name="Schwartz D.C."/>
            <person name="Tanaka T."/>
            <person name="Wu J."/>
            <person name="Zhou S."/>
            <person name="Childs K.L."/>
            <person name="Davidson R.M."/>
            <person name="Lin H."/>
            <person name="Quesada-Ocampo L."/>
            <person name="Vaillancourt B."/>
            <person name="Sakai H."/>
            <person name="Lee S.S."/>
            <person name="Kim J."/>
            <person name="Numa H."/>
            <person name="Itoh T."/>
            <person name="Buell C.R."/>
            <person name="Matsumoto T."/>
        </authorList>
    </citation>
    <scope>GENOME REANNOTATION</scope>
    <source>
        <strain>cv. Nipponbare</strain>
    </source>
</reference>
<reference key="4">
    <citation type="journal article" date="2011" name="J. Plant Physiol.">
        <title>Knockdown of OsPAO and OsRCCR1 cause different plant death phenotypes in rice.</title>
        <authorList>
            <person name="Tang Y."/>
            <person name="Li M."/>
            <person name="Chen Y."/>
            <person name="Wu P."/>
            <person name="Wu G."/>
            <person name="Jiang H."/>
        </authorList>
    </citation>
    <scope>FUNCTION</scope>
    <scope>TISSUE SPECIFICITY</scope>
    <scope>INDUCTION</scope>
</reference>
<feature type="transit peptide" description="Chloroplast" evidence="2">
    <location>
        <begin position="1"/>
        <end position="47"/>
    </location>
</feature>
<feature type="chain" id="PRO_0000449574" description="Pheophorbide a oxygenase, chloroplastic">
    <location>
        <begin position="48"/>
        <end position="529"/>
    </location>
</feature>
<feature type="domain" description="Rieske" evidence="3">
    <location>
        <begin position="82"/>
        <end position="194"/>
    </location>
</feature>
<feature type="region of interest" description="Disordered" evidence="4">
    <location>
        <begin position="1"/>
        <end position="24"/>
    </location>
</feature>
<feature type="region of interest" description="Disordered" evidence="4">
    <location>
        <begin position="46"/>
        <end position="72"/>
    </location>
</feature>
<feature type="binding site" evidence="3">
    <location>
        <position position="124"/>
    </location>
    <ligand>
        <name>[2Fe-2S] cluster</name>
        <dbReference type="ChEBI" id="CHEBI:190135"/>
    </ligand>
</feature>
<feature type="binding site" evidence="3">
    <location>
        <position position="126"/>
    </location>
    <ligand>
        <name>[2Fe-2S] cluster</name>
        <dbReference type="ChEBI" id="CHEBI:190135"/>
    </ligand>
</feature>
<feature type="binding site" evidence="3">
    <location>
        <position position="144"/>
    </location>
    <ligand>
        <name>[2Fe-2S] cluster</name>
        <dbReference type="ChEBI" id="CHEBI:190135"/>
    </ligand>
</feature>
<feature type="binding site" evidence="3">
    <location>
        <position position="147"/>
    </location>
    <ligand>
        <name>[2Fe-2S] cluster</name>
        <dbReference type="ChEBI" id="CHEBI:190135"/>
    </ligand>
</feature>
<proteinExistence type="evidence at transcript level"/>